<comment type="function">
    <text>Putative pheromone receptor.</text>
</comment>
<comment type="subcellular location">
    <subcellularLocation>
        <location>Cell membrane</location>
        <topology>Multi-pass membrane protein</topology>
    </subcellularLocation>
</comment>
<comment type="similarity">
    <text evidence="2">Belongs to the G-protein coupled receptor 1 family.</text>
</comment>
<reference key="1">
    <citation type="journal article" date="2002" name="Chem. Senses">
        <title>Identification of V1R-like putative pheromone receptor sequences in non-human primates. Characterization of V1R pseudogenes in marmoset, a primate species that possesses an intact vomeronasal organ.</title>
        <authorList>
            <person name="Giorgi D."/>
            <person name="Rouquier S."/>
        </authorList>
    </citation>
    <scope>NUCLEOTIDE SEQUENCE [GENOMIC DNA]</scope>
</reference>
<reference key="2">
    <citation type="journal article" date="2003" name="Proc. Natl. Acad. Sci. U.S.A.">
        <title>Evolutionary deterioration of the vomeronasal pheromone transduction pathway in catarrhine primates.</title>
        <authorList>
            <person name="Zhang J."/>
            <person name="Webb D.M."/>
        </authorList>
    </citation>
    <scope>NUCLEOTIDE SEQUENCE [GENOMIC DNA]</scope>
</reference>
<keyword id="KW-1003">Cell membrane</keyword>
<keyword id="KW-0297">G-protein coupled receptor</keyword>
<keyword id="KW-0325">Glycoprotein</keyword>
<keyword id="KW-0472">Membrane</keyword>
<keyword id="KW-0589">Pheromone response</keyword>
<keyword id="KW-0675">Receptor</keyword>
<keyword id="KW-1185">Reference proteome</keyword>
<keyword id="KW-0807">Transducer</keyword>
<keyword id="KW-0812">Transmembrane</keyword>
<keyword id="KW-1133">Transmembrane helix</keyword>
<evidence type="ECO:0000255" key="1"/>
<evidence type="ECO:0000255" key="2">
    <source>
        <dbReference type="PROSITE-ProRule" id="PRU00521"/>
    </source>
</evidence>
<evidence type="ECO:0000305" key="3"/>
<feature type="chain" id="PRO_0000070212" description="Vomeronasal type-1 receptor 1">
    <location>
        <begin position="1"/>
        <end position="353"/>
    </location>
</feature>
<feature type="topological domain" description="Extracellular" evidence="1">
    <location>
        <begin position="1"/>
        <end position="56"/>
    </location>
</feature>
<feature type="transmembrane region" description="Helical; Name=1" evidence="1">
    <location>
        <begin position="57"/>
        <end position="77"/>
    </location>
</feature>
<feature type="topological domain" description="Cytoplasmic" evidence="1">
    <location>
        <begin position="78"/>
        <end position="84"/>
    </location>
</feature>
<feature type="transmembrane region" description="Helical; Name=2" evidence="1">
    <location>
        <begin position="85"/>
        <end position="105"/>
    </location>
</feature>
<feature type="topological domain" description="Extracellular" evidence="1">
    <location>
        <begin position="106"/>
        <end position="132"/>
    </location>
</feature>
<feature type="transmembrane region" description="Helical; Name=3" evidence="1">
    <location>
        <begin position="133"/>
        <end position="153"/>
    </location>
</feature>
<feature type="topological domain" description="Cytoplasmic" evidence="1">
    <location>
        <begin position="154"/>
        <end position="169"/>
    </location>
</feature>
<feature type="transmembrane region" description="Helical; Name=4" evidence="1">
    <location>
        <begin position="170"/>
        <end position="190"/>
    </location>
</feature>
<feature type="topological domain" description="Extracellular" evidence="1">
    <location>
        <begin position="191"/>
        <end position="226"/>
    </location>
</feature>
<feature type="transmembrane region" description="Helical; Name=5" evidence="1">
    <location>
        <begin position="227"/>
        <end position="247"/>
    </location>
</feature>
<feature type="topological domain" description="Cytoplasmic" evidence="1">
    <location>
        <begin position="248"/>
        <end position="274"/>
    </location>
</feature>
<feature type="transmembrane region" description="Helical; Name=6" evidence="1">
    <location>
        <begin position="275"/>
        <end position="295"/>
    </location>
</feature>
<feature type="topological domain" description="Extracellular" evidence="1">
    <location>
        <begin position="296"/>
        <end position="303"/>
    </location>
</feature>
<feature type="transmembrane region" description="Helical; Name=7" evidence="1">
    <location>
        <begin position="304"/>
        <end position="324"/>
    </location>
</feature>
<feature type="topological domain" description="Cytoplasmic" evidence="1">
    <location>
        <begin position="325"/>
        <end position="353"/>
    </location>
</feature>
<feature type="glycosylation site" description="N-linked (GlcNAc...) asparagine" evidence="1">
    <location>
        <position position="117"/>
    </location>
</feature>
<feature type="glycosylation site" description="N-linked (GlcNAc...) asparagine" evidence="1">
    <location>
        <position position="198"/>
    </location>
</feature>
<feature type="sequence conflict" description="In Ref. 2; AAP85608." evidence="3" ref="2">
    <original>F</original>
    <variation>L</variation>
    <location>
        <position position="216"/>
    </location>
</feature>
<accession>Q8WN92</accession>
<accession>Q7YRP4</accession>
<dbReference type="EMBL" id="AF426107">
    <property type="protein sequence ID" value="AAL60180.1"/>
    <property type="molecule type" value="Genomic_DNA"/>
</dbReference>
<dbReference type="EMBL" id="AY312464">
    <property type="protein sequence ID" value="AAP85608.1"/>
    <property type="molecule type" value="Genomic_DNA"/>
</dbReference>
<dbReference type="SMR" id="Q8WN92"/>
<dbReference type="FunCoup" id="Q8WN92">
    <property type="interactions" value="3"/>
</dbReference>
<dbReference type="STRING" id="9593.ENSGGOP00000022152"/>
<dbReference type="GlyCosmos" id="Q8WN92">
    <property type="glycosylation" value="2 sites, No reported glycans"/>
</dbReference>
<dbReference type="eggNOG" id="ENOG502RD1P">
    <property type="taxonomic scope" value="Eukaryota"/>
</dbReference>
<dbReference type="InParanoid" id="Q8WN92"/>
<dbReference type="Proteomes" id="UP000001519">
    <property type="component" value="Unplaced"/>
</dbReference>
<dbReference type="GO" id="GO:0005886">
    <property type="term" value="C:plasma membrane"/>
    <property type="evidence" value="ECO:0007669"/>
    <property type="project" value="UniProtKB-SubCell"/>
</dbReference>
<dbReference type="GO" id="GO:0016503">
    <property type="term" value="F:pheromone receptor activity"/>
    <property type="evidence" value="ECO:0007669"/>
    <property type="project" value="InterPro"/>
</dbReference>
<dbReference type="GO" id="GO:0019236">
    <property type="term" value="P:response to pheromone"/>
    <property type="evidence" value="ECO:0007669"/>
    <property type="project" value="UniProtKB-KW"/>
</dbReference>
<dbReference type="GO" id="GO:0007606">
    <property type="term" value="P:sensory perception of chemical stimulus"/>
    <property type="evidence" value="ECO:0007669"/>
    <property type="project" value="UniProtKB-ARBA"/>
</dbReference>
<dbReference type="CDD" id="cd13949">
    <property type="entry name" value="7tm_V1R_pheromone"/>
    <property type="match status" value="1"/>
</dbReference>
<dbReference type="FunFam" id="1.20.1070.10:FF:000033">
    <property type="entry name" value="Vomeronasal type-1 receptor"/>
    <property type="match status" value="1"/>
</dbReference>
<dbReference type="Gene3D" id="1.20.1070.10">
    <property type="entry name" value="Rhodopsin 7-helix transmembrane proteins"/>
    <property type="match status" value="1"/>
</dbReference>
<dbReference type="InterPro" id="IPR017452">
    <property type="entry name" value="GPCR_Rhodpsn_7TM"/>
</dbReference>
<dbReference type="InterPro" id="IPR004072">
    <property type="entry name" value="Vmron_rcpt_1"/>
</dbReference>
<dbReference type="PANTHER" id="PTHR24062">
    <property type="entry name" value="VOMERONASAL TYPE-1 RECEPTOR"/>
    <property type="match status" value="1"/>
</dbReference>
<dbReference type="Pfam" id="PF03402">
    <property type="entry name" value="V1R"/>
    <property type="match status" value="1"/>
</dbReference>
<dbReference type="PRINTS" id="PR01534">
    <property type="entry name" value="VOMERONASL1R"/>
</dbReference>
<dbReference type="SUPFAM" id="SSF81321">
    <property type="entry name" value="Family A G protein-coupled receptor-like"/>
    <property type="match status" value="1"/>
</dbReference>
<dbReference type="PROSITE" id="PS50262">
    <property type="entry name" value="G_PROTEIN_RECEP_F1_2"/>
    <property type="match status" value="1"/>
</dbReference>
<proteinExistence type="inferred from homology"/>
<sequence>MVGDTLKLLSPLMTRYFFLLFYSTDSSDLNENQHPLDFDEMAFGKVKSGISFLIQTGVGILGNSFLLCFYNLILFTGHKLRPTDLILSHLALANSMVLFFKGIPQTMAAFGLKYLLNDTGCKFVFYYHRVGTRVSLSTICLLNGFQAIKLNPSICRWMEIKIRSPRFIDFCCLLCWVPHVLMNASVLLLVNGPLNSKNSSAKNNYGYCSYKASKRFSSLHAVLYFSPDFMSLGFMVWASGSMVFFLYRHKQQVQHNHSNRLSCRPSQETRATRTIMVLVSSFFVFYSVHSFLTIWTTVVANPGQWIVNNSVLVASYFPSRSPFVLIMSDTRISQFCFACRTRKTLFPNLVVMP</sequence>
<organism>
    <name type="scientific">Gorilla gorilla gorilla</name>
    <name type="common">Western lowland gorilla</name>
    <dbReference type="NCBI Taxonomy" id="9595"/>
    <lineage>
        <taxon>Eukaryota</taxon>
        <taxon>Metazoa</taxon>
        <taxon>Chordata</taxon>
        <taxon>Craniata</taxon>
        <taxon>Vertebrata</taxon>
        <taxon>Euteleostomi</taxon>
        <taxon>Mammalia</taxon>
        <taxon>Eutheria</taxon>
        <taxon>Euarchontoglires</taxon>
        <taxon>Primates</taxon>
        <taxon>Haplorrhini</taxon>
        <taxon>Catarrhini</taxon>
        <taxon>Hominidae</taxon>
        <taxon>Gorilla</taxon>
    </lineage>
</organism>
<protein>
    <recommendedName>
        <fullName>Vomeronasal type-1 receptor 1</fullName>
    </recommendedName>
    <alternativeName>
        <fullName>V1r-like receptor 1</fullName>
    </alternativeName>
</protein>
<name>VN1R1_GORGO</name>
<gene>
    <name type="primary">VN1R1</name>
    <name type="synonym">V1RL1</name>
</gene>